<gene>
    <name evidence="2" type="primary">ddl</name>
    <name type="ordered locus">ACIAD3515</name>
</gene>
<evidence type="ECO:0000250" key="1"/>
<evidence type="ECO:0000255" key="2">
    <source>
        <dbReference type="HAMAP-Rule" id="MF_00047"/>
    </source>
</evidence>
<comment type="function">
    <text evidence="2">Cell wall formation.</text>
</comment>
<comment type="catalytic activity">
    <reaction evidence="2">
        <text>2 D-alanine + ATP = D-alanyl-D-alanine + ADP + phosphate + H(+)</text>
        <dbReference type="Rhea" id="RHEA:11224"/>
        <dbReference type="ChEBI" id="CHEBI:15378"/>
        <dbReference type="ChEBI" id="CHEBI:30616"/>
        <dbReference type="ChEBI" id="CHEBI:43474"/>
        <dbReference type="ChEBI" id="CHEBI:57416"/>
        <dbReference type="ChEBI" id="CHEBI:57822"/>
        <dbReference type="ChEBI" id="CHEBI:456216"/>
        <dbReference type="EC" id="6.3.2.4"/>
    </reaction>
</comment>
<comment type="cofactor">
    <cofactor evidence="1">
        <name>Mg(2+)</name>
        <dbReference type="ChEBI" id="CHEBI:18420"/>
    </cofactor>
    <cofactor evidence="1">
        <name>Mn(2+)</name>
        <dbReference type="ChEBI" id="CHEBI:29035"/>
    </cofactor>
    <text evidence="1">Binds 2 magnesium or manganese ions per subunit.</text>
</comment>
<comment type="pathway">
    <text evidence="2">Cell wall biogenesis; peptidoglycan biosynthesis.</text>
</comment>
<comment type="subcellular location">
    <subcellularLocation>
        <location evidence="2">Cytoplasm</location>
    </subcellularLocation>
</comment>
<comment type="similarity">
    <text evidence="2">Belongs to the D-alanine--D-alanine ligase family.</text>
</comment>
<feature type="chain" id="PRO_0000341046" description="D-alanine--D-alanine ligase">
    <location>
        <begin position="1"/>
        <end position="309"/>
    </location>
</feature>
<feature type="domain" description="ATP-grasp" evidence="2">
    <location>
        <begin position="104"/>
        <end position="301"/>
    </location>
</feature>
<feature type="binding site" evidence="2">
    <location>
        <begin position="130"/>
        <end position="185"/>
    </location>
    <ligand>
        <name>ATP</name>
        <dbReference type="ChEBI" id="CHEBI:30616"/>
    </ligand>
</feature>
<feature type="binding site" evidence="2">
    <location>
        <position position="255"/>
    </location>
    <ligand>
        <name>Mg(2+)</name>
        <dbReference type="ChEBI" id="CHEBI:18420"/>
        <label>1</label>
    </ligand>
</feature>
<feature type="binding site" evidence="2">
    <location>
        <position position="268"/>
    </location>
    <ligand>
        <name>Mg(2+)</name>
        <dbReference type="ChEBI" id="CHEBI:18420"/>
        <label>1</label>
    </ligand>
</feature>
<feature type="binding site" evidence="2">
    <location>
        <position position="268"/>
    </location>
    <ligand>
        <name>Mg(2+)</name>
        <dbReference type="ChEBI" id="CHEBI:18420"/>
        <label>2</label>
    </ligand>
</feature>
<feature type="binding site" evidence="2">
    <location>
        <position position="270"/>
    </location>
    <ligand>
        <name>Mg(2+)</name>
        <dbReference type="ChEBI" id="CHEBI:18420"/>
        <label>2</label>
    </ligand>
</feature>
<name>DDL_ACIAD</name>
<keyword id="KW-0067">ATP-binding</keyword>
<keyword id="KW-0133">Cell shape</keyword>
<keyword id="KW-0961">Cell wall biogenesis/degradation</keyword>
<keyword id="KW-0963">Cytoplasm</keyword>
<keyword id="KW-0436">Ligase</keyword>
<keyword id="KW-0460">Magnesium</keyword>
<keyword id="KW-0464">Manganese</keyword>
<keyword id="KW-0479">Metal-binding</keyword>
<keyword id="KW-0547">Nucleotide-binding</keyword>
<keyword id="KW-0573">Peptidoglycan synthesis</keyword>
<accession>Q6F705</accession>
<dbReference type="EC" id="6.3.2.4" evidence="2"/>
<dbReference type="EMBL" id="CR543861">
    <property type="protein sequence ID" value="CAG70160.1"/>
    <property type="molecule type" value="Genomic_DNA"/>
</dbReference>
<dbReference type="RefSeq" id="WP_004923338.1">
    <property type="nucleotide sequence ID" value="NC_005966.1"/>
</dbReference>
<dbReference type="SMR" id="Q6F705"/>
<dbReference type="STRING" id="202950.GCA_001485005_01696"/>
<dbReference type="GeneID" id="45235693"/>
<dbReference type="KEGG" id="aci:ACIAD3515"/>
<dbReference type="eggNOG" id="COG1181">
    <property type="taxonomic scope" value="Bacteria"/>
</dbReference>
<dbReference type="HOGENOM" id="CLU_039268_1_2_6"/>
<dbReference type="OrthoDB" id="9813261at2"/>
<dbReference type="BioCyc" id="ASP62977:ACIAD_RS15895-MONOMER"/>
<dbReference type="UniPathway" id="UPA00219"/>
<dbReference type="Proteomes" id="UP000000430">
    <property type="component" value="Chromosome"/>
</dbReference>
<dbReference type="GO" id="GO:0005829">
    <property type="term" value="C:cytosol"/>
    <property type="evidence" value="ECO:0007669"/>
    <property type="project" value="TreeGrafter"/>
</dbReference>
<dbReference type="GO" id="GO:0005524">
    <property type="term" value="F:ATP binding"/>
    <property type="evidence" value="ECO:0007669"/>
    <property type="project" value="UniProtKB-KW"/>
</dbReference>
<dbReference type="GO" id="GO:0008716">
    <property type="term" value="F:D-alanine-D-alanine ligase activity"/>
    <property type="evidence" value="ECO:0007669"/>
    <property type="project" value="UniProtKB-UniRule"/>
</dbReference>
<dbReference type="GO" id="GO:0046872">
    <property type="term" value="F:metal ion binding"/>
    <property type="evidence" value="ECO:0007669"/>
    <property type="project" value="UniProtKB-KW"/>
</dbReference>
<dbReference type="GO" id="GO:0071555">
    <property type="term" value="P:cell wall organization"/>
    <property type="evidence" value="ECO:0007669"/>
    <property type="project" value="UniProtKB-KW"/>
</dbReference>
<dbReference type="GO" id="GO:0009252">
    <property type="term" value="P:peptidoglycan biosynthetic process"/>
    <property type="evidence" value="ECO:0007669"/>
    <property type="project" value="UniProtKB-UniRule"/>
</dbReference>
<dbReference type="GO" id="GO:0008360">
    <property type="term" value="P:regulation of cell shape"/>
    <property type="evidence" value="ECO:0007669"/>
    <property type="project" value="UniProtKB-KW"/>
</dbReference>
<dbReference type="FunFam" id="3.30.470.20:FF:000008">
    <property type="entry name" value="D-alanine--D-alanine ligase"/>
    <property type="match status" value="1"/>
</dbReference>
<dbReference type="Gene3D" id="3.40.50.20">
    <property type="match status" value="1"/>
</dbReference>
<dbReference type="Gene3D" id="3.30.470.20">
    <property type="entry name" value="ATP-grasp fold, B domain"/>
    <property type="match status" value="1"/>
</dbReference>
<dbReference type="HAMAP" id="MF_00047">
    <property type="entry name" value="Dala_Dala_lig"/>
    <property type="match status" value="1"/>
</dbReference>
<dbReference type="InterPro" id="IPR011761">
    <property type="entry name" value="ATP-grasp"/>
</dbReference>
<dbReference type="InterPro" id="IPR000291">
    <property type="entry name" value="D-Ala_lig_Van_CS"/>
</dbReference>
<dbReference type="InterPro" id="IPR005905">
    <property type="entry name" value="D_ala_D_ala"/>
</dbReference>
<dbReference type="InterPro" id="IPR011095">
    <property type="entry name" value="Dala_Dala_lig_C"/>
</dbReference>
<dbReference type="InterPro" id="IPR011127">
    <property type="entry name" value="Dala_Dala_lig_N"/>
</dbReference>
<dbReference type="InterPro" id="IPR016185">
    <property type="entry name" value="PreATP-grasp_dom_sf"/>
</dbReference>
<dbReference type="NCBIfam" id="TIGR01205">
    <property type="entry name" value="D_ala_D_alaTIGR"/>
    <property type="match status" value="1"/>
</dbReference>
<dbReference type="NCBIfam" id="NF002378">
    <property type="entry name" value="PRK01372.1"/>
    <property type="match status" value="1"/>
</dbReference>
<dbReference type="PANTHER" id="PTHR23132">
    <property type="entry name" value="D-ALANINE--D-ALANINE LIGASE"/>
    <property type="match status" value="1"/>
</dbReference>
<dbReference type="PANTHER" id="PTHR23132:SF23">
    <property type="entry name" value="D-ALANINE--D-ALANINE LIGASE B"/>
    <property type="match status" value="1"/>
</dbReference>
<dbReference type="Pfam" id="PF07478">
    <property type="entry name" value="Dala_Dala_lig_C"/>
    <property type="match status" value="1"/>
</dbReference>
<dbReference type="Pfam" id="PF01820">
    <property type="entry name" value="Dala_Dala_lig_N"/>
    <property type="match status" value="1"/>
</dbReference>
<dbReference type="PIRSF" id="PIRSF039102">
    <property type="entry name" value="Ddl/VanB"/>
    <property type="match status" value="1"/>
</dbReference>
<dbReference type="SUPFAM" id="SSF56059">
    <property type="entry name" value="Glutathione synthetase ATP-binding domain-like"/>
    <property type="match status" value="1"/>
</dbReference>
<dbReference type="SUPFAM" id="SSF52440">
    <property type="entry name" value="PreATP-grasp domain"/>
    <property type="match status" value="1"/>
</dbReference>
<dbReference type="PROSITE" id="PS50975">
    <property type="entry name" value="ATP_GRASP"/>
    <property type="match status" value="1"/>
</dbReference>
<dbReference type="PROSITE" id="PS00843">
    <property type="entry name" value="DALA_DALA_LIGASE_1"/>
    <property type="match status" value="1"/>
</dbReference>
<dbReference type="PROSITE" id="PS00844">
    <property type="entry name" value="DALA_DALA_LIGASE_2"/>
    <property type="match status" value="1"/>
</dbReference>
<protein>
    <recommendedName>
        <fullName evidence="2">D-alanine--D-alanine ligase</fullName>
        <ecNumber evidence="2">6.3.2.4</ecNumber>
    </recommendedName>
    <alternativeName>
        <fullName evidence="2">D-Ala-D-Ala ligase</fullName>
    </alternativeName>
    <alternativeName>
        <fullName evidence="2">D-alanylalanine synthetase</fullName>
    </alternativeName>
</protein>
<sequence>MSNASKFGKVAVLFGGKSAERDVSLDSGQAVLDALLRSGVQAEAFDPKERSVTELVGYDRAFIVLHGRGGEDGQIQGVLEWLDIPYTGTGVQGSAIGMDKIKTKQIWQGSDLPTAPYRIVSKDSDLNEIVASLGLPVIIKPVHEGSSIGMSKVEKIEDFAPAIEKATAHDAIVMAEKWITGREYTIVVLNGKALPVIRLQPPQDVAFYDYDAKYQRNDVQYGIPSGLSDSDEKKLQELTLRAFHTVGASGWGRVDAMQDEHGNFWLLEINTVPGMTSHSLVPKAAQAIGIDFDALCVEILAQTLTGLAH</sequence>
<organism>
    <name type="scientific">Acinetobacter baylyi (strain ATCC 33305 / BD413 / ADP1)</name>
    <dbReference type="NCBI Taxonomy" id="62977"/>
    <lineage>
        <taxon>Bacteria</taxon>
        <taxon>Pseudomonadati</taxon>
        <taxon>Pseudomonadota</taxon>
        <taxon>Gammaproteobacteria</taxon>
        <taxon>Moraxellales</taxon>
        <taxon>Moraxellaceae</taxon>
        <taxon>Acinetobacter</taxon>
    </lineage>
</organism>
<reference key="1">
    <citation type="journal article" date="2004" name="Nucleic Acids Res.">
        <title>Unique features revealed by the genome sequence of Acinetobacter sp. ADP1, a versatile and naturally transformation competent bacterium.</title>
        <authorList>
            <person name="Barbe V."/>
            <person name="Vallenet D."/>
            <person name="Fonknechten N."/>
            <person name="Kreimeyer A."/>
            <person name="Oztas S."/>
            <person name="Labarre L."/>
            <person name="Cruveiller S."/>
            <person name="Robert C."/>
            <person name="Duprat S."/>
            <person name="Wincker P."/>
            <person name="Ornston L.N."/>
            <person name="Weissenbach J."/>
            <person name="Marliere P."/>
            <person name="Cohen G.N."/>
            <person name="Medigue C."/>
        </authorList>
    </citation>
    <scope>NUCLEOTIDE SEQUENCE [LARGE SCALE GENOMIC DNA]</scope>
    <source>
        <strain>ATCC 33305 / BD413 / ADP1</strain>
    </source>
</reference>
<proteinExistence type="inferred from homology"/>